<keyword id="KW-0002">3D-structure</keyword>
<keyword id="KW-0240">DNA-directed RNA polymerase</keyword>
<keyword id="KW-0548">Nucleotidyltransferase</keyword>
<keyword id="KW-1185">Reference proteome</keyword>
<keyword id="KW-0804">Transcription</keyword>
<keyword id="KW-0808">Transferase</keyword>
<name>RPOA_PSEAE</name>
<feature type="chain" id="PRO_0000175359" description="DNA-directed RNA polymerase subunit alpha">
    <location>
        <begin position="1"/>
        <end position="333"/>
    </location>
</feature>
<feature type="region of interest" description="Alpha N-terminal domain (alpha-NTD)" evidence="1">
    <location>
        <begin position="1"/>
        <end position="234"/>
    </location>
</feature>
<feature type="region of interest" description="Alpha C-terminal domain (alpha-CTD)" evidence="1">
    <location>
        <begin position="248"/>
        <end position="333"/>
    </location>
</feature>
<feature type="sequence conflict" description="In Ref. 1; AAC03116." evidence="2" ref="1">
    <original>KKDDKATA</original>
    <variation>TERRQGHCLIVVTTERKVWKGIEPCAIVKVVVT</variation>
    <location>
        <begin position="326"/>
        <end position="333"/>
    </location>
</feature>
<feature type="strand" evidence="3">
    <location>
        <begin position="15"/>
        <end position="17"/>
    </location>
</feature>
<feature type="strand" evidence="3">
    <location>
        <begin position="19"/>
        <end position="22"/>
    </location>
</feature>
<feature type="strand" evidence="3">
    <location>
        <begin position="24"/>
        <end position="31"/>
    </location>
</feature>
<feature type="turn" evidence="3">
    <location>
        <begin position="33"/>
        <end position="39"/>
    </location>
</feature>
<feature type="helix" evidence="3">
    <location>
        <begin position="40"/>
        <end position="47"/>
    </location>
</feature>
<feature type="strand" evidence="3">
    <location>
        <begin position="53"/>
        <end position="63"/>
    </location>
</feature>
<feature type="strand" evidence="4">
    <location>
        <begin position="74"/>
        <end position="76"/>
    </location>
</feature>
<feature type="helix" evidence="3">
    <location>
        <begin position="78"/>
        <end position="85"/>
    </location>
</feature>
<feature type="strand" evidence="3">
    <location>
        <begin position="90"/>
        <end position="94"/>
    </location>
</feature>
<feature type="strand" evidence="3">
    <location>
        <begin position="96"/>
        <end position="104"/>
    </location>
</feature>
<feature type="strand" evidence="3">
    <location>
        <begin position="109"/>
        <end position="111"/>
    </location>
</feature>
<feature type="helix" evidence="3">
    <location>
        <begin position="112"/>
        <end position="114"/>
    </location>
</feature>
<feature type="strand" evidence="3">
    <location>
        <begin position="119"/>
        <end position="124"/>
    </location>
</feature>
<feature type="strand" evidence="3">
    <location>
        <begin position="129"/>
        <end position="132"/>
    </location>
</feature>
<feature type="strand" evidence="3">
    <location>
        <begin position="139"/>
        <end position="152"/>
    </location>
</feature>
<feature type="turn" evidence="3">
    <location>
        <begin position="154"/>
        <end position="156"/>
    </location>
</feature>
<feature type="strand" evidence="3">
    <location>
        <begin position="169"/>
        <end position="171"/>
    </location>
</feature>
<feature type="strand" evidence="3">
    <location>
        <begin position="179"/>
        <end position="181"/>
    </location>
</feature>
<feature type="strand" evidence="3">
    <location>
        <begin position="184"/>
        <end position="189"/>
    </location>
</feature>
<feature type="strand" evidence="3">
    <location>
        <begin position="195"/>
        <end position="206"/>
    </location>
</feature>
<feature type="strand" evidence="3">
    <location>
        <begin position="208"/>
        <end position="210"/>
    </location>
</feature>
<feature type="helix" evidence="3">
    <location>
        <begin position="212"/>
        <end position="228"/>
    </location>
</feature>
<evidence type="ECO:0000255" key="1">
    <source>
        <dbReference type="HAMAP-Rule" id="MF_00059"/>
    </source>
</evidence>
<evidence type="ECO:0000305" key="2"/>
<evidence type="ECO:0007829" key="3">
    <source>
        <dbReference type="PDB" id="7XL3"/>
    </source>
</evidence>
<evidence type="ECO:0007829" key="4">
    <source>
        <dbReference type="PDB" id="7XYA"/>
    </source>
</evidence>
<gene>
    <name evidence="1" type="primary">rpoA</name>
    <name type="ordered locus">PA4238</name>
</gene>
<organism>
    <name type="scientific">Pseudomonas aeruginosa (strain ATCC 15692 / DSM 22644 / CIP 104116 / JCM 14847 / LMG 12228 / 1C / PRS 101 / PAO1)</name>
    <dbReference type="NCBI Taxonomy" id="208964"/>
    <lineage>
        <taxon>Bacteria</taxon>
        <taxon>Pseudomonadati</taxon>
        <taxon>Pseudomonadota</taxon>
        <taxon>Gammaproteobacteria</taxon>
        <taxon>Pseudomonadales</taxon>
        <taxon>Pseudomonadaceae</taxon>
        <taxon>Pseudomonas</taxon>
    </lineage>
</organism>
<reference key="1">
    <citation type="journal article" date="1999" name="J. Bacteriol.">
        <title>Bacterioferritin A modulates catalase A (KatA) activity and resistance to hydrogen peroxide in Pseudomonas aeruginosa.</title>
        <authorList>
            <person name="Ma J.-F."/>
            <person name="Ochsner U.A."/>
            <person name="Klotz M.G."/>
            <person name="Nanayakkara V.K."/>
            <person name="Howell M.L."/>
            <person name="Johnson Z."/>
            <person name="Posey J.E."/>
            <person name="Vasil M.L."/>
            <person name="Monaco J.J."/>
            <person name="Hassett D.J."/>
        </authorList>
    </citation>
    <scope>NUCLEOTIDE SEQUENCE [GENOMIC DNA]</scope>
    <source>
        <strain>FRD1</strain>
    </source>
</reference>
<reference key="2">
    <citation type="journal article" date="2000" name="Nature">
        <title>Complete genome sequence of Pseudomonas aeruginosa PAO1, an opportunistic pathogen.</title>
        <authorList>
            <person name="Stover C.K."/>
            <person name="Pham X.-Q.T."/>
            <person name="Erwin A.L."/>
            <person name="Mizoguchi S.D."/>
            <person name="Warrener P."/>
            <person name="Hickey M.J."/>
            <person name="Brinkman F.S.L."/>
            <person name="Hufnagle W.O."/>
            <person name="Kowalik D.J."/>
            <person name="Lagrou M."/>
            <person name="Garber R.L."/>
            <person name="Goltry L."/>
            <person name="Tolentino E."/>
            <person name="Westbrock-Wadman S."/>
            <person name="Yuan Y."/>
            <person name="Brody L.L."/>
            <person name="Coulter S.N."/>
            <person name="Folger K.R."/>
            <person name="Kas A."/>
            <person name="Larbig K."/>
            <person name="Lim R.M."/>
            <person name="Smith K.A."/>
            <person name="Spencer D.H."/>
            <person name="Wong G.K.-S."/>
            <person name="Wu Z."/>
            <person name="Paulsen I.T."/>
            <person name="Reizer J."/>
            <person name="Saier M.H. Jr."/>
            <person name="Hancock R.E.W."/>
            <person name="Lory S."/>
            <person name="Olson M.V."/>
        </authorList>
    </citation>
    <scope>NUCLEOTIDE SEQUENCE [LARGE SCALE GENOMIC DNA]</scope>
    <source>
        <strain>ATCC 15692 / DSM 22644 / CIP 104116 / JCM 14847 / LMG 12228 / 1C / PRS 101 / PAO1</strain>
    </source>
</reference>
<sequence length="333" mass="36650">MQSSVNEFLTPRHIDVQVVSQTRAKITLEPLERGFGHTLGNALRRILLSSMPGCAVVEAEIDGVLHEYSAIEGVQEDVIEILLNLKGLAIKLHGRDEVTLTLAKKGSGVVTAADIQLDHDVEIINGDHVIANLADNGALNMKLKVARGRGYEPADARQSDEDESRSIGRLQLDASFSPVRRVSYVVENARVEQRTNLDKLVLDLETNGTLDPEEAIRRAATILQQQLAAFVDLKGDSEPVVEEQEDEIDPILLRPVDDLELTVRSANCLKAENIYYIGDLIQRTEVELLKTPNLGKKSLTEIKDVLASRGLSLGMRLDNWPPASLKKDDKATA</sequence>
<dbReference type="EC" id="2.7.7.6" evidence="1"/>
<dbReference type="EMBL" id="AF047025">
    <property type="protein sequence ID" value="AAC03116.1"/>
    <property type="molecule type" value="Genomic_DNA"/>
</dbReference>
<dbReference type="EMBL" id="AE004091">
    <property type="protein sequence ID" value="AAG07626.1"/>
    <property type="molecule type" value="Genomic_DNA"/>
</dbReference>
<dbReference type="PIR" id="D83113">
    <property type="entry name" value="D83113"/>
</dbReference>
<dbReference type="RefSeq" id="NP_252928.1">
    <property type="nucleotide sequence ID" value="NC_002516.2"/>
</dbReference>
<dbReference type="RefSeq" id="WP_003093675.1">
    <property type="nucleotide sequence ID" value="NZ_QZGE01000028.1"/>
</dbReference>
<dbReference type="PDB" id="7F0R">
    <property type="method" value="EM"/>
    <property type="resolution" value="5.80 A"/>
    <property type="chains" value="A/B=1-333"/>
</dbReference>
<dbReference type="PDB" id="7VF9">
    <property type="method" value="EM"/>
    <property type="resolution" value="4.04 A"/>
    <property type="chains" value="A/B=1-333"/>
</dbReference>
<dbReference type="PDB" id="7XL3">
    <property type="method" value="EM"/>
    <property type="resolution" value="3.13 A"/>
    <property type="chains" value="A/B=1-333"/>
</dbReference>
<dbReference type="PDB" id="7XL4">
    <property type="method" value="EM"/>
    <property type="resolution" value="3.86 A"/>
    <property type="chains" value="A/B=1-333"/>
</dbReference>
<dbReference type="PDB" id="7XYA">
    <property type="method" value="EM"/>
    <property type="resolution" value="3.30 A"/>
    <property type="chains" value="A/B=1-333"/>
</dbReference>
<dbReference type="PDB" id="7XYB">
    <property type="method" value="EM"/>
    <property type="resolution" value="3.70 A"/>
    <property type="chains" value="A/B=1-333"/>
</dbReference>
<dbReference type="PDBsum" id="7F0R"/>
<dbReference type="PDBsum" id="7VF9"/>
<dbReference type="PDBsum" id="7XL3"/>
<dbReference type="PDBsum" id="7XL4"/>
<dbReference type="PDBsum" id="7XYA"/>
<dbReference type="PDBsum" id="7XYB"/>
<dbReference type="EMDB" id="EMD-31403"/>
<dbReference type="EMDB" id="EMD-31948"/>
<dbReference type="EMDB" id="EMD-33271"/>
<dbReference type="EMDB" id="EMD-33272"/>
<dbReference type="EMDB" id="EMD-33515"/>
<dbReference type="EMDB" id="EMD-33516"/>
<dbReference type="SMR" id="O52760"/>
<dbReference type="FunCoup" id="O52760">
    <property type="interactions" value="634"/>
</dbReference>
<dbReference type="STRING" id="208964.PA4238"/>
<dbReference type="PaxDb" id="208964-PA4238"/>
<dbReference type="DNASU" id="881813"/>
<dbReference type="GeneID" id="881813"/>
<dbReference type="KEGG" id="pae:PA4238"/>
<dbReference type="PATRIC" id="fig|208964.12.peg.4439"/>
<dbReference type="PseudoCAP" id="PA4238"/>
<dbReference type="HOGENOM" id="CLU_053084_0_0_6"/>
<dbReference type="InParanoid" id="O52760"/>
<dbReference type="OrthoDB" id="9805706at2"/>
<dbReference type="PhylomeDB" id="O52760"/>
<dbReference type="BioCyc" id="PAER208964:G1FZ6-4311-MONOMER"/>
<dbReference type="Proteomes" id="UP000002438">
    <property type="component" value="Chromosome"/>
</dbReference>
<dbReference type="GO" id="GO:0005737">
    <property type="term" value="C:cytoplasm"/>
    <property type="evidence" value="ECO:0000318"/>
    <property type="project" value="GO_Central"/>
</dbReference>
<dbReference type="GO" id="GO:0000428">
    <property type="term" value="C:DNA-directed RNA polymerase complex"/>
    <property type="evidence" value="ECO:0007669"/>
    <property type="project" value="UniProtKB-KW"/>
</dbReference>
<dbReference type="GO" id="GO:0003677">
    <property type="term" value="F:DNA binding"/>
    <property type="evidence" value="ECO:0007669"/>
    <property type="project" value="UniProtKB-UniRule"/>
</dbReference>
<dbReference type="GO" id="GO:0003899">
    <property type="term" value="F:DNA-directed RNA polymerase activity"/>
    <property type="evidence" value="ECO:0007669"/>
    <property type="project" value="UniProtKB-UniRule"/>
</dbReference>
<dbReference type="GO" id="GO:0046983">
    <property type="term" value="F:protein dimerization activity"/>
    <property type="evidence" value="ECO:0007669"/>
    <property type="project" value="InterPro"/>
</dbReference>
<dbReference type="GO" id="GO:0006351">
    <property type="term" value="P:DNA-templated transcription"/>
    <property type="evidence" value="ECO:0007669"/>
    <property type="project" value="UniProtKB-UniRule"/>
</dbReference>
<dbReference type="CDD" id="cd06928">
    <property type="entry name" value="RNAP_alpha_NTD"/>
    <property type="match status" value="1"/>
</dbReference>
<dbReference type="FunFam" id="1.10.150.20:FF:000001">
    <property type="entry name" value="DNA-directed RNA polymerase subunit alpha"/>
    <property type="match status" value="1"/>
</dbReference>
<dbReference type="FunFam" id="2.170.120.12:FF:000001">
    <property type="entry name" value="DNA-directed RNA polymerase subunit alpha"/>
    <property type="match status" value="1"/>
</dbReference>
<dbReference type="Gene3D" id="1.10.150.20">
    <property type="entry name" value="5' to 3' exonuclease, C-terminal subdomain"/>
    <property type="match status" value="1"/>
</dbReference>
<dbReference type="Gene3D" id="2.170.120.12">
    <property type="entry name" value="DNA-directed RNA polymerase, insert domain"/>
    <property type="match status" value="1"/>
</dbReference>
<dbReference type="Gene3D" id="3.30.1360.10">
    <property type="entry name" value="RNA polymerase, RBP11-like subunit"/>
    <property type="match status" value="1"/>
</dbReference>
<dbReference type="HAMAP" id="MF_00059">
    <property type="entry name" value="RNApol_bact_RpoA"/>
    <property type="match status" value="1"/>
</dbReference>
<dbReference type="InterPro" id="IPR011262">
    <property type="entry name" value="DNA-dir_RNA_pol_insert"/>
</dbReference>
<dbReference type="InterPro" id="IPR011263">
    <property type="entry name" value="DNA-dir_RNA_pol_RpoA/D/Rpb3"/>
</dbReference>
<dbReference type="InterPro" id="IPR011773">
    <property type="entry name" value="DNA-dir_RpoA"/>
</dbReference>
<dbReference type="InterPro" id="IPR036603">
    <property type="entry name" value="RBP11-like"/>
</dbReference>
<dbReference type="InterPro" id="IPR011260">
    <property type="entry name" value="RNAP_asu_C"/>
</dbReference>
<dbReference type="InterPro" id="IPR036643">
    <property type="entry name" value="RNApol_insert_sf"/>
</dbReference>
<dbReference type="NCBIfam" id="NF003513">
    <property type="entry name" value="PRK05182.1-2"/>
    <property type="match status" value="1"/>
</dbReference>
<dbReference type="NCBIfam" id="NF003519">
    <property type="entry name" value="PRK05182.2-5"/>
    <property type="match status" value="1"/>
</dbReference>
<dbReference type="NCBIfam" id="TIGR02027">
    <property type="entry name" value="rpoA"/>
    <property type="match status" value="1"/>
</dbReference>
<dbReference type="Pfam" id="PF01000">
    <property type="entry name" value="RNA_pol_A_bac"/>
    <property type="match status" value="1"/>
</dbReference>
<dbReference type="Pfam" id="PF03118">
    <property type="entry name" value="RNA_pol_A_CTD"/>
    <property type="match status" value="1"/>
</dbReference>
<dbReference type="Pfam" id="PF01193">
    <property type="entry name" value="RNA_pol_L"/>
    <property type="match status" value="1"/>
</dbReference>
<dbReference type="SMART" id="SM00662">
    <property type="entry name" value="RPOLD"/>
    <property type="match status" value="1"/>
</dbReference>
<dbReference type="SUPFAM" id="SSF47789">
    <property type="entry name" value="C-terminal domain of RNA polymerase alpha subunit"/>
    <property type="match status" value="1"/>
</dbReference>
<dbReference type="SUPFAM" id="SSF56553">
    <property type="entry name" value="Insert subdomain of RNA polymerase alpha subunit"/>
    <property type="match status" value="1"/>
</dbReference>
<dbReference type="SUPFAM" id="SSF55257">
    <property type="entry name" value="RBP11-like subunits of RNA polymerase"/>
    <property type="match status" value="1"/>
</dbReference>
<accession>O52760</accession>
<comment type="function">
    <text evidence="1">DNA-dependent RNA polymerase catalyzes the transcription of DNA into RNA using the four ribonucleoside triphosphates as substrates.</text>
</comment>
<comment type="catalytic activity">
    <reaction evidence="1">
        <text>RNA(n) + a ribonucleoside 5'-triphosphate = RNA(n+1) + diphosphate</text>
        <dbReference type="Rhea" id="RHEA:21248"/>
        <dbReference type="Rhea" id="RHEA-COMP:14527"/>
        <dbReference type="Rhea" id="RHEA-COMP:17342"/>
        <dbReference type="ChEBI" id="CHEBI:33019"/>
        <dbReference type="ChEBI" id="CHEBI:61557"/>
        <dbReference type="ChEBI" id="CHEBI:140395"/>
        <dbReference type="EC" id="2.7.7.6"/>
    </reaction>
</comment>
<comment type="subunit">
    <text evidence="1">Homodimer. The RNAP catalytic core consists of 2 alpha, 1 beta, 1 beta' and 1 omega subunit. When a sigma factor is associated with the core the holoenzyme is formed, which can initiate transcription.</text>
</comment>
<comment type="domain">
    <text evidence="1">The N-terminal domain is essential for RNAP assembly and basal transcription, whereas the C-terminal domain is involved in interaction with transcriptional regulators and with upstream promoter elements.</text>
</comment>
<comment type="similarity">
    <text evidence="1">Belongs to the RNA polymerase alpha chain family.</text>
</comment>
<protein>
    <recommendedName>
        <fullName evidence="1">DNA-directed RNA polymerase subunit alpha</fullName>
        <shortName evidence="1">RNAP subunit alpha</shortName>
        <ecNumber evidence="1">2.7.7.6</ecNumber>
    </recommendedName>
    <alternativeName>
        <fullName evidence="1">RNA polymerase subunit alpha</fullName>
    </alternativeName>
    <alternativeName>
        <fullName evidence="1">Transcriptase subunit alpha</fullName>
    </alternativeName>
</protein>
<proteinExistence type="evidence at protein level"/>